<accession>B2U265</accession>
<protein>
    <recommendedName>
        <fullName evidence="1">RNA polymerase-associated protein RapA</fullName>
        <ecNumber evidence="1">3.6.4.-</ecNumber>
    </recommendedName>
    <alternativeName>
        <fullName evidence="1">ATP-dependent helicase HepA</fullName>
    </alternativeName>
</protein>
<sequence length="968" mass="109735">MPFTLGQRWISDTESELGLGTVVAVDARTVTLLFPSTGENRLYARSDSPVTRVMFNPGDTITSHDGWQMQVEEVKEENGLLTYIGTRLDTEESGVALREVFLDSKLVFSKPQDRLFAGQIDRMDRFALRYRARKYSSEQFRMPYSGLRGQRTSLIPHQLNIAHDVGRRHAPRVLLADEVGLGKTIEAGMILHQQLLSGAAERVLIIVPETLQHQWLVEMLRRFNLRFALFDDERYAEAQHDAYNPFDTEQLVICSLDFARRSKQRLEHLCEAEWDLLVVDEAHHLVWSEDAPSREYQAIEQLAEHVPGVLLLTATPEQLGMESHFARLRLLDPNRFHDFAQFVEEQKNYRPVADAVAMLLAGNKLSNDELNMLGEMIGEQDIEPLLQAANSDSEDAQSARQELVSMLMDRHGTSRVLFRNTRNGVKGFPKRELHTIKLPLPTQYQTAIKVSGIMGARKSAEDRARDMLYPERIYQEFEGDNATWWNFDPRVEWLMGYLTSHRSQKVLVICAKAATALQLEQVLREREGIRAAVFHEGMSIIERDRAAAWFAEEDTGAQVLLCSEIGSEGRNFQFASHMVMFDLPFNPDLLEQRIGRLDRIGQAHDIQIHVPYLEKTAQSVLVRWYHEGLDAFEHTCPTGRTIYDSVYNDLINYLASPDQTEGFDDLIKNCREQHEALKAQLEQGRDRLLEIHSNGGEKAQALAESIEEQDDDTNLIAFAMNLLDIIGINQDDRGDNMIVLTPSDHMLVPDFPGLSEDGITITFDREVALAREDAQFITWEHPLIRNGLDLILSGDTGSSTISLLKNKALPVGTLLVELIYVVEAQAPKQLQLNRFLPPTPVRMLLDKNGNNLAAQVEFETFNRQLNAVNRHTGSKLVNAVQQDVHAILQLGEAQIEKSARALIDAARNEADEKLSAELSRLEALRAVNPNIRDDELTAIESNRQQVMESLDQAGWRLDALRLIVVTHQ</sequence>
<name>RAPA_SHIB3</name>
<gene>
    <name evidence="1" type="primary">rapA</name>
    <name type="ordered locus">SbBS512_E0051</name>
</gene>
<reference key="1">
    <citation type="submission" date="2008-05" db="EMBL/GenBank/DDBJ databases">
        <title>Complete sequence of Shigella boydii serotype 18 strain BS512.</title>
        <authorList>
            <person name="Rasko D.A."/>
            <person name="Rosovitz M."/>
            <person name="Maurelli A.T."/>
            <person name="Myers G."/>
            <person name="Seshadri R."/>
            <person name="Cer R."/>
            <person name="Jiang L."/>
            <person name="Ravel J."/>
            <person name="Sebastian Y."/>
        </authorList>
    </citation>
    <scope>NUCLEOTIDE SEQUENCE [LARGE SCALE GENOMIC DNA]</scope>
    <source>
        <strain>CDC 3083-94 / BS512</strain>
    </source>
</reference>
<comment type="function">
    <text evidence="1">Transcription regulator that activates transcription by stimulating RNA polymerase (RNAP) recycling in case of stress conditions such as supercoiled DNA or high salt concentrations. Probably acts by releasing the RNAP, when it is trapped or immobilized on tightly supercoiled DNA. Does not activate transcription on linear DNA. Probably not involved in DNA repair.</text>
</comment>
<comment type="subunit">
    <text evidence="1">Interacts with the RNAP. Has a higher affinity for the core RNAP than for the holoenzyme. Its ATPase activity is stimulated by binding to RNAP.</text>
</comment>
<comment type="similarity">
    <text evidence="1">Belongs to the SNF2/RAD54 helicase family. RapA subfamily.</text>
</comment>
<proteinExistence type="inferred from homology"/>
<keyword id="KW-0010">Activator</keyword>
<keyword id="KW-0067">ATP-binding</keyword>
<keyword id="KW-0238">DNA-binding</keyword>
<keyword id="KW-0347">Helicase</keyword>
<keyword id="KW-0378">Hydrolase</keyword>
<keyword id="KW-0547">Nucleotide-binding</keyword>
<keyword id="KW-1185">Reference proteome</keyword>
<keyword id="KW-0804">Transcription</keyword>
<keyword id="KW-0805">Transcription regulation</keyword>
<dbReference type="EC" id="3.6.4.-" evidence="1"/>
<dbReference type="EMBL" id="CP001063">
    <property type="protein sequence ID" value="ACD07716.1"/>
    <property type="molecule type" value="Genomic_DNA"/>
</dbReference>
<dbReference type="RefSeq" id="WP_001117019.1">
    <property type="nucleotide sequence ID" value="NC_010658.1"/>
</dbReference>
<dbReference type="SMR" id="B2U265"/>
<dbReference type="STRING" id="344609.SbBS512_E0051"/>
<dbReference type="KEGG" id="sbc:SbBS512_E0051"/>
<dbReference type="HOGENOM" id="CLU_011520_0_0_6"/>
<dbReference type="Proteomes" id="UP000001030">
    <property type="component" value="Chromosome"/>
</dbReference>
<dbReference type="GO" id="GO:0005524">
    <property type="term" value="F:ATP binding"/>
    <property type="evidence" value="ECO:0007669"/>
    <property type="project" value="UniProtKB-UniRule"/>
</dbReference>
<dbReference type="GO" id="GO:0003677">
    <property type="term" value="F:DNA binding"/>
    <property type="evidence" value="ECO:0007669"/>
    <property type="project" value="UniProtKB-KW"/>
</dbReference>
<dbReference type="GO" id="GO:0004386">
    <property type="term" value="F:helicase activity"/>
    <property type="evidence" value="ECO:0007669"/>
    <property type="project" value="UniProtKB-UniRule"/>
</dbReference>
<dbReference type="GO" id="GO:0016817">
    <property type="term" value="F:hydrolase activity, acting on acid anhydrides"/>
    <property type="evidence" value="ECO:0007669"/>
    <property type="project" value="InterPro"/>
</dbReference>
<dbReference type="GO" id="GO:0006355">
    <property type="term" value="P:regulation of DNA-templated transcription"/>
    <property type="evidence" value="ECO:0007669"/>
    <property type="project" value="UniProtKB-UniRule"/>
</dbReference>
<dbReference type="CDD" id="cd18011">
    <property type="entry name" value="DEXDc_RapA"/>
    <property type="match status" value="1"/>
</dbReference>
<dbReference type="CDD" id="cd18793">
    <property type="entry name" value="SF2_C_SNF"/>
    <property type="match status" value="1"/>
</dbReference>
<dbReference type="FunFam" id="2.30.30.140:FF:000020">
    <property type="entry name" value="RNA polymerase-associated protein RapA"/>
    <property type="match status" value="1"/>
</dbReference>
<dbReference type="FunFam" id="2.30.30.930:FF:000001">
    <property type="entry name" value="RNA polymerase-associated protein RapA"/>
    <property type="match status" value="1"/>
</dbReference>
<dbReference type="FunFam" id="3.30.360.80:FF:000001">
    <property type="entry name" value="RNA polymerase-associated protein RapA"/>
    <property type="match status" value="1"/>
</dbReference>
<dbReference type="FunFam" id="3.40.50.10810:FF:000012">
    <property type="entry name" value="RNA polymerase-associated protein RapA"/>
    <property type="match status" value="1"/>
</dbReference>
<dbReference type="FunFam" id="3.40.50.300:FF:000350">
    <property type="entry name" value="RNA polymerase-associated protein RapA"/>
    <property type="match status" value="1"/>
</dbReference>
<dbReference type="Gene3D" id="2.30.30.140">
    <property type="match status" value="1"/>
</dbReference>
<dbReference type="Gene3D" id="2.30.30.930">
    <property type="match status" value="1"/>
</dbReference>
<dbReference type="Gene3D" id="3.30.360.80">
    <property type="match status" value="1"/>
</dbReference>
<dbReference type="Gene3D" id="6.10.140.1500">
    <property type="match status" value="1"/>
</dbReference>
<dbReference type="Gene3D" id="6.10.140.2230">
    <property type="match status" value="1"/>
</dbReference>
<dbReference type="Gene3D" id="3.40.50.300">
    <property type="entry name" value="P-loop containing nucleotide triphosphate hydrolases"/>
    <property type="match status" value="1"/>
</dbReference>
<dbReference type="Gene3D" id="3.40.50.10810">
    <property type="entry name" value="Tandem AAA-ATPase domain"/>
    <property type="match status" value="1"/>
</dbReference>
<dbReference type="HAMAP" id="MF_01821">
    <property type="entry name" value="Helicase_RapA"/>
    <property type="match status" value="1"/>
</dbReference>
<dbReference type="InterPro" id="IPR014001">
    <property type="entry name" value="Helicase_ATP-bd"/>
</dbReference>
<dbReference type="InterPro" id="IPR001650">
    <property type="entry name" value="Helicase_C-like"/>
</dbReference>
<dbReference type="InterPro" id="IPR023949">
    <property type="entry name" value="Helicase_RapA"/>
</dbReference>
<dbReference type="InterPro" id="IPR027417">
    <property type="entry name" value="P-loop_NTPase"/>
</dbReference>
<dbReference type="InterPro" id="IPR022737">
    <property type="entry name" value="RapA_C"/>
</dbReference>
<dbReference type="InterPro" id="IPR038718">
    <property type="entry name" value="SNF2-like_sf"/>
</dbReference>
<dbReference type="InterPro" id="IPR049730">
    <property type="entry name" value="SNF2/RAD54-like_C"/>
</dbReference>
<dbReference type="InterPro" id="IPR000330">
    <property type="entry name" value="SNF2_N"/>
</dbReference>
<dbReference type="InterPro" id="IPR040765">
    <property type="entry name" value="Tudor_1_RapA"/>
</dbReference>
<dbReference type="InterPro" id="IPR040766">
    <property type="entry name" value="Tudor_2_RapA"/>
</dbReference>
<dbReference type="NCBIfam" id="NF003426">
    <property type="entry name" value="PRK04914.1"/>
    <property type="match status" value="1"/>
</dbReference>
<dbReference type="PANTHER" id="PTHR45766">
    <property type="entry name" value="DNA ANNEALING HELICASE AND ENDONUCLEASE ZRANB3 FAMILY MEMBER"/>
    <property type="match status" value="1"/>
</dbReference>
<dbReference type="PANTHER" id="PTHR45766:SF6">
    <property type="entry name" value="SWI_SNF-RELATED MATRIX-ASSOCIATED ACTIN-DEPENDENT REGULATOR OF CHROMATIN SUBFAMILY A-LIKE PROTEIN 1"/>
    <property type="match status" value="1"/>
</dbReference>
<dbReference type="Pfam" id="PF00271">
    <property type="entry name" value="Helicase_C"/>
    <property type="match status" value="1"/>
</dbReference>
<dbReference type="Pfam" id="PF12137">
    <property type="entry name" value="RapA_C"/>
    <property type="match status" value="1"/>
</dbReference>
<dbReference type="Pfam" id="PF00176">
    <property type="entry name" value="SNF2-rel_dom"/>
    <property type="match status" value="1"/>
</dbReference>
<dbReference type="Pfam" id="PF18339">
    <property type="entry name" value="Tudor_1_RapA"/>
    <property type="match status" value="1"/>
</dbReference>
<dbReference type="Pfam" id="PF18337">
    <property type="entry name" value="Tudor_RapA"/>
    <property type="match status" value="1"/>
</dbReference>
<dbReference type="SMART" id="SM00487">
    <property type="entry name" value="DEXDc"/>
    <property type="match status" value="1"/>
</dbReference>
<dbReference type="SMART" id="SM00490">
    <property type="entry name" value="HELICc"/>
    <property type="match status" value="1"/>
</dbReference>
<dbReference type="SUPFAM" id="SSF52540">
    <property type="entry name" value="P-loop containing nucleoside triphosphate hydrolases"/>
    <property type="match status" value="2"/>
</dbReference>
<dbReference type="PROSITE" id="PS51192">
    <property type="entry name" value="HELICASE_ATP_BIND_1"/>
    <property type="match status" value="1"/>
</dbReference>
<dbReference type="PROSITE" id="PS51194">
    <property type="entry name" value="HELICASE_CTER"/>
    <property type="match status" value="1"/>
</dbReference>
<evidence type="ECO:0000255" key="1">
    <source>
        <dbReference type="HAMAP-Rule" id="MF_01821"/>
    </source>
</evidence>
<organism>
    <name type="scientific">Shigella boydii serotype 18 (strain CDC 3083-94 / BS512)</name>
    <dbReference type="NCBI Taxonomy" id="344609"/>
    <lineage>
        <taxon>Bacteria</taxon>
        <taxon>Pseudomonadati</taxon>
        <taxon>Pseudomonadota</taxon>
        <taxon>Gammaproteobacteria</taxon>
        <taxon>Enterobacterales</taxon>
        <taxon>Enterobacteriaceae</taxon>
        <taxon>Shigella</taxon>
    </lineage>
</organism>
<feature type="chain" id="PRO_1000188193" description="RNA polymerase-associated protein RapA">
    <location>
        <begin position="1"/>
        <end position="968"/>
    </location>
</feature>
<feature type="domain" description="Helicase ATP-binding" evidence="1">
    <location>
        <begin position="164"/>
        <end position="334"/>
    </location>
</feature>
<feature type="domain" description="Helicase C-terminal" evidence="1">
    <location>
        <begin position="490"/>
        <end position="662"/>
    </location>
</feature>
<feature type="short sequence motif" description="DEAH box">
    <location>
        <begin position="280"/>
        <end position="283"/>
    </location>
</feature>
<feature type="binding site" evidence="1">
    <location>
        <begin position="177"/>
        <end position="184"/>
    </location>
    <ligand>
        <name>ATP</name>
        <dbReference type="ChEBI" id="CHEBI:30616"/>
    </ligand>
</feature>